<proteinExistence type="evidence at protein level"/>
<accession>P56741</accession>
<organism>
    <name type="scientific">Rattus norvegicus</name>
    <name type="common">Rat</name>
    <dbReference type="NCBI Taxonomy" id="10116"/>
    <lineage>
        <taxon>Eukaryota</taxon>
        <taxon>Metazoa</taxon>
        <taxon>Chordata</taxon>
        <taxon>Craniata</taxon>
        <taxon>Vertebrata</taxon>
        <taxon>Euteleostomi</taxon>
        <taxon>Mammalia</taxon>
        <taxon>Eutheria</taxon>
        <taxon>Euarchontoglires</taxon>
        <taxon>Glires</taxon>
        <taxon>Rodentia</taxon>
        <taxon>Myomorpha</taxon>
        <taxon>Muroidea</taxon>
        <taxon>Muridae</taxon>
        <taxon>Murinae</taxon>
        <taxon>Rattus</taxon>
    </lineage>
</organism>
<keyword id="KW-0007">Acetylation</keyword>
<keyword id="KW-0009">Actin-binding</keyword>
<keyword id="KW-0130">Cell adhesion</keyword>
<keyword id="KW-1015">Disulfide bond</keyword>
<keyword id="KW-0393">Immunoglobulin domain</keyword>
<keyword id="KW-0479">Metal-binding</keyword>
<keyword id="KW-0488">Methylation</keyword>
<keyword id="KW-0514">Muscle protein</keyword>
<keyword id="KW-0597">Phosphoprotein</keyword>
<keyword id="KW-1185">Reference proteome</keyword>
<keyword id="KW-0677">Repeat</keyword>
<keyword id="KW-0787">Thick filament</keyword>
<keyword id="KW-0832">Ubl conjugation</keyword>
<keyword id="KW-0862">Zinc</keyword>
<protein>
    <recommendedName>
        <fullName>Myosin-binding protein C, cardiac-type</fullName>
        <shortName>Cardiac MyBP-C</shortName>
    </recommendedName>
    <alternativeName>
        <fullName>C-protein, cardiac muscle isoform</fullName>
    </alternativeName>
</protein>
<gene>
    <name type="primary">Mybpc3</name>
</gene>
<comment type="function">
    <text>Thick filament-associated protein located in the crossbridge region of vertebrate striated muscle a bands. In vitro it binds MHC, F-actin and native thin filaments, and modifies the activity of actin-activated myosin ATPase. It may modulate muscle contraction or may play a more structural role.</text>
</comment>
<comment type="PTM">
    <text>Substrate for phosphorylation by PKA and PKC. Reversible phosphorylation appears to modulate contraction.</text>
</comment>
<comment type="PTM">
    <text evidence="3">Polyubiquitinated.</text>
</comment>
<comment type="similarity">
    <text evidence="7">Belongs to the immunoglobulin superfamily. MyBP family.</text>
</comment>
<dbReference type="EMBL" id="CH473949">
    <property type="protein sequence ID" value="EDL79508.1"/>
    <property type="molecule type" value="Genomic_DNA"/>
</dbReference>
<dbReference type="RefSeq" id="NP_001099960.1">
    <property type="nucleotide sequence ID" value="NM_001106490.1"/>
</dbReference>
<dbReference type="SMR" id="P56741"/>
<dbReference type="BioGRID" id="255188">
    <property type="interactions" value="3"/>
</dbReference>
<dbReference type="FunCoup" id="P56741">
    <property type="interactions" value="16"/>
</dbReference>
<dbReference type="STRING" id="10116.ENSRNOP00000016652"/>
<dbReference type="CarbonylDB" id="P56741"/>
<dbReference type="GlyGen" id="P56741">
    <property type="glycosylation" value="1 site, 1 O-linked glycan (1 site)"/>
</dbReference>
<dbReference type="iPTMnet" id="P56741"/>
<dbReference type="PhosphoSitePlus" id="P56741"/>
<dbReference type="SwissPalm" id="P56741"/>
<dbReference type="PaxDb" id="10116-ENSRNOP00000016652"/>
<dbReference type="GeneID" id="295929"/>
<dbReference type="KEGG" id="rno:295929"/>
<dbReference type="UCSC" id="RGD:1305950">
    <property type="organism name" value="rat"/>
</dbReference>
<dbReference type="AGR" id="RGD:1305950"/>
<dbReference type="CTD" id="4607"/>
<dbReference type="RGD" id="1305950">
    <property type="gene designation" value="Mybpc3"/>
</dbReference>
<dbReference type="VEuPathDB" id="HostDB:ENSRNOG00000012307"/>
<dbReference type="eggNOG" id="ENOG502QWRQ">
    <property type="taxonomic scope" value="Eukaryota"/>
</dbReference>
<dbReference type="HOGENOM" id="CLU_006405_1_1_1"/>
<dbReference type="InParanoid" id="P56741"/>
<dbReference type="PhylomeDB" id="P56741"/>
<dbReference type="Reactome" id="R-RNO-390522">
    <property type="pathway name" value="Striated Muscle Contraction"/>
</dbReference>
<dbReference type="PRO" id="PR:P56741"/>
<dbReference type="Proteomes" id="UP000002494">
    <property type="component" value="Chromosome 3"/>
</dbReference>
<dbReference type="Proteomes" id="UP000234681">
    <property type="component" value="Chromosome 3"/>
</dbReference>
<dbReference type="Bgee" id="ENSRNOG00000012307">
    <property type="expression patterns" value="Expressed in heart and 12 other cell types or tissues"/>
</dbReference>
<dbReference type="GO" id="GO:0031672">
    <property type="term" value="C:A band"/>
    <property type="evidence" value="ECO:0000266"/>
    <property type="project" value="RGD"/>
</dbReference>
<dbReference type="GO" id="GO:0097512">
    <property type="term" value="C:cardiac myofibril"/>
    <property type="evidence" value="ECO:0000266"/>
    <property type="project" value="RGD"/>
</dbReference>
<dbReference type="GO" id="GO:0031430">
    <property type="term" value="C:M band"/>
    <property type="evidence" value="ECO:0000318"/>
    <property type="project" value="GO_Central"/>
</dbReference>
<dbReference type="GO" id="GO:0030016">
    <property type="term" value="C:myofibril"/>
    <property type="evidence" value="ECO:0000266"/>
    <property type="project" value="RGD"/>
</dbReference>
<dbReference type="GO" id="GO:0030017">
    <property type="term" value="C:sarcomere"/>
    <property type="evidence" value="ECO:0000266"/>
    <property type="project" value="RGD"/>
</dbReference>
<dbReference type="GO" id="GO:0005863">
    <property type="term" value="C:striated muscle myosin thick filament"/>
    <property type="evidence" value="ECO:0000314"/>
    <property type="project" value="BHF-UCL"/>
</dbReference>
<dbReference type="GO" id="GO:0003779">
    <property type="term" value="F:actin binding"/>
    <property type="evidence" value="ECO:0007669"/>
    <property type="project" value="UniProtKB-KW"/>
</dbReference>
<dbReference type="GO" id="GO:0042802">
    <property type="term" value="F:identical protein binding"/>
    <property type="evidence" value="ECO:0000266"/>
    <property type="project" value="RGD"/>
</dbReference>
<dbReference type="GO" id="GO:0046872">
    <property type="term" value="F:metal ion binding"/>
    <property type="evidence" value="ECO:0007669"/>
    <property type="project" value="UniProtKB-KW"/>
</dbReference>
<dbReference type="GO" id="GO:0017022">
    <property type="term" value="F:myosin binding"/>
    <property type="evidence" value="ECO:0000266"/>
    <property type="project" value="RGD"/>
</dbReference>
<dbReference type="GO" id="GO:0032036">
    <property type="term" value="F:myosin heavy chain binding"/>
    <property type="evidence" value="ECO:0000266"/>
    <property type="project" value="RGD"/>
</dbReference>
<dbReference type="GO" id="GO:0008307">
    <property type="term" value="F:structural constituent of muscle"/>
    <property type="evidence" value="ECO:0000266"/>
    <property type="project" value="RGD"/>
</dbReference>
<dbReference type="GO" id="GO:0060048">
    <property type="term" value="P:cardiac muscle contraction"/>
    <property type="evidence" value="ECO:0000270"/>
    <property type="project" value="BHF-UCL"/>
</dbReference>
<dbReference type="GO" id="GO:0007155">
    <property type="term" value="P:cell adhesion"/>
    <property type="evidence" value="ECO:0007669"/>
    <property type="project" value="UniProtKB-KW"/>
</dbReference>
<dbReference type="GO" id="GO:0003007">
    <property type="term" value="P:heart morphogenesis"/>
    <property type="evidence" value="ECO:0000266"/>
    <property type="project" value="RGD"/>
</dbReference>
<dbReference type="GO" id="GO:0031034">
    <property type="term" value="P:myosin filament assembly"/>
    <property type="evidence" value="ECO:0000266"/>
    <property type="project" value="RGD"/>
</dbReference>
<dbReference type="GO" id="GO:0008016">
    <property type="term" value="P:regulation of heart contraction"/>
    <property type="evidence" value="ECO:0000266"/>
    <property type="project" value="RGD"/>
</dbReference>
<dbReference type="GO" id="GO:0002027">
    <property type="term" value="P:regulation of heart rate"/>
    <property type="evidence" value="ECO:0000266"/>
    <property type="project" value="RGD"/>
</dbReference>
<dbReference type="GO" id="GO:0006942">
    <property type="term" value="P:regulation of striated muscle contraction"/>
    <property type="evidence" value="ECO:0000270"/>
    <property type="project" value="BHF-UCL"/>
</dbReference>
<dbReference type="GO" id="GO:0045214">
    <property type="term" value="P:sarcomere organization"/>
    <property type="evidence" value="ECO:0000266"/>
    <property type="project" value="RGD"/>
</dbReference>
<dbReference type="GO" id="GO:0055010">
    <property type="term" value="P:ventricular cardiac muscle tissue morphogenesis"/>
    <property type="evidence" value="ECO:0000266"/>
    <property type="project" value="RGD"/>
</dbReference>
<dbReference type="CDD" id="cd00063">
    <property type="entry name" value="FN3"/>
    <property type="match status" value="3"/>
</dbReference>
<dbReference type="CDD" id="cd00096">
    <property type="entry name" value="Ig"/>
    <property type="match status" value="1"/>
</dbReference>
<dbReference type="CDD" id="cd05894">
    <property type="entry name" value="Ig_C5_MyBP-C"/>
    <property type="match status" value="1"/>
</dbReference>
<dbReference type="CDD" id="cd20962">
    <property type="entry name" value="IgI_C1_MyBP-C_like"/>
    <property type="match status" value="1"/>
</dbReference>
<dbReference type="CDD" id="cd20967">
    <property type="entry name" value="IgI_C2_MyBP-C-like"/>
    <property type="match status" value="1"/>
</dbReference>
<dbReference type="FunFam" id="2.60.40.10:FF:000225">
    <property type="entry name" value="Myosin-binding protein C, cardiac-type"/>
    <property type="match status" value="1"/>
</dbReference>
<dbReference type="FunFam" id="2.60.40.10:FF:000326">
    <property type="entry name" value="Myosin-binding protein C, cardiac-type"/>
    <property type="match status" value="1"/>
</dbReference>
<dbReference type="FunFam" id="2.60.40.10:FF:000518">
    <property type="entry name" value="Myosin-binding protein C, cardiac-type"/>
    <property type="match status" value="1"/>
</dbReference>
<dbReference type="FunFam" id="2.60.40.10:FF:000576">
    <property type="entry name" value="Myosin-binding protein C, cardiac-type"/>
    <property type="match status" value="1"/>
</dbReference>
<dbReference type="FunFam" id="2.60.40.10:FF:000031">
    <property type="entry name" value="Myosin-binding protein C, slow type"/>
    <property type="match status" value="1"/>
</dbReference>
<dbReference type="FunFam" id="2.60.40.10:FF:000060">
    <property type="entry name" value="Myosin-binding protein C, slow type"/>
    <property type="match status" value="1"/>
</dbReference>
<dbReference type="FunFam" id="2.60.40.10:FF:000062">
    <property type="entry name" value="Myosin-binding protein C, slow type"/>
    <property type="match status" value="1"/>
</dbReference>
<dbReference type="FunFam" id="2.60.40.10:FF:000070">
    <property type="entry name" value="Myosin-binding protein C, slow type"/>
    <property type="match status" value="1"/>
</dbReference>
<dbReference type="FunFam" id="2.60.40.10:FF:000081">
    <property type="entry name" value="Myosin-binding protein C, slow type"/>
    <property type="match status" value="1"/>
</dbReference>
<dbReference type="FunFam" id="2.60.40.10:FF:000085">
    <property type="entry name" value="Myosin-binding protein C, slow type"/>
    <property type="match status" value="1"/>
</dbReference>
<dbReference type="FunFam" id="2.60.40.10:FF:000111">
    <property type="entry name" value="Myosin-binding protein C, slow type"/>
    <property type="match status" value="1"/>
</dbReference>
<dbReference type="Gene3D" id="2.60.40.10">
    <property type="entry name" value="Immunoglobulins"/>
    <property type="match status" value="11"/>
</dbReference>
<dbReference type="InterPro" id="IPR003961">
    <property type="entry name" value="FN3_dom"/>
</dbReference>
<dbReference type="InterPro" id="IPR036116">
    <property type="entry name" value="FN3_sf"/>
</dbReference>
<dbReference type="InterPro" id="IPR007110">
    <property type="entry name" value="Ig-like_dom"/>
</dbReference>
<dbReference type="InterPro" id="IPR036179">
    <property type="entry name" value="Ig-like_dom_sf"/>
</dbReference>
<dbReference type="InterPro" id="IPR013783">
    <property type="entry name" value="Ig-like_fold"/>
</dbReference>
<dbReference type="InterPro" id="IPR013098">
    <property type="entry name" value="Ig_I-set"/>
</dbReference>
<dbReference type="InterPro" id="IPR003599">
    <property type="entry name" value="Ig_sub"/>
</dbReference>
<dbReference type="InterPro" id="IPR003598">
    <property type="entry name" value="Ig_sub2"/>
</dbReference>
<dbReference type="InterPro" id="IPR040849">
    <property type="entry name" value="MyBP-C_THB"/>
</dbReference>
<dbReference type="InterPro" id="IPR050964">
    <property type="entry name" value="Striated_Muscle_Regulatory"/>
</dbReference>
<dbReference type="PANTHER" id="PTHR13817:SF168">
    <property type="match status" value="1"/>
</dbReference>
<dbReference type="PANTHER" id="PTHR13817">
    <property type="entry name" value="TITIN"/>
    <property type="match status" value="1"/>
</dbReference>
<dbReference type="Pfam" id="PF00041">
    <property type="entry name" value="fn3"/>
    <property type="match status" value="3"/>
</dbReference>
<dbReference type="Pfam" id="PF07679">
    <property type="entry name" value="I-set"/>
    <property type="match status" value="8"/>
</dbReference>
<dbReference type="Pfam" id="PF18362">
    <property type="entry name" value="THB"/>
    <property type="match status" value="1"/>
</dbReference>
<dbReference type="SMART" id="SM00060">
    <property type="entry name" value="FN3"/>
    <property type="match status" value="3"/>
</dbReference>
<dbReference type="SMART" id="SM00409">
    <property type="entry name" value="IG"/>
    <property type="match status" value="8"/>
</dbReference>
<dbReference type="SMART" id="SM00408">
    <property type="entry name" value="IGc2"/>
    <property type="match status" value="5"/>
</dbReference>
<dbReference type="SUPFAM" id="SSF49265">
    <property type="entry name" value="Fibronectin type III"/>
    <property type="match status" value="2"/>
</dbReference>
<dbReference type="SUPFAM" id="SSF48726">
    <property type="entry name" value="Immunoglobulin"/>
    <property type="match status" value="8"/>
</dbReference>
<dbReference type="PROSITE" id="PS50853">
    <property type="entry name" value="FN3"/>
    <property type="match status" value="3"/>
</dbReference>
<dbReference type="PROSITE" id="PS50835">
    <property type="entry name" value="IG_LIKE"/>
    <property type="match status" value="7"/>
</dbReference>
<evidence type="ECO:0000250" key="1"/>
<evidence type="ECO:0000250" key="2">
    <source>
        <dbReference type="UniProtKB" id="O70468"/>
    </source>
</evidence>
<evidence type="ECO:0000250" key="3">
    <source>
        <dbReference type="UniProtKB" id="Q14896"/>
    </source>
</evidence>
<evidence type="ECO:0000255" key="4">
    <source>
        <dbReference type="PROSITE-ProRule" id="PRU00114"/>
    </source>
</evidence>
<evidence type="ECO:0000255" key="5">
    <source>
        <dbReference type="PROSITE-ProRule" id="PRU00316"/>
    </source>
</evidence>
<evidence type="ECO:0000256" key="6">
    <source>
        <dbReference type="SAM" id="MobiDB-lite"/>
    </source>
</evidence>
<evidence type="ECO:0000305" key="7"/>
<evidence type="ECO:0007744" key="8">
    <source>
    </source>
</evidence>
<reference key="1">
    <citation type="submission" date="2005-08" db="EMBL/GenBank/DDBJ databases">
        <authorList>
            <person name="Mural R.J."/>
            <person name="Adams M.D."/>
            <person name="Myers E.W."/>
            <person name="Smith H.O."/>
            <person name="Venter J.C."/>
        </authorList>
    </citation>
    <scope>NUCLEOTIDE SEQUENCE [LARGE SCALE GENOMIC DNA]</scope>
</reference>
<reference key="2">
    <citation type="journal article" date="1998" name="Arch. Biochem. Biophys.">
        <title>Cardiac myosin-binding protein C (MyBP-C): identification of protein kinase A and protein kinase C phosphorylation sites.</title>
        <authorList>
            <person name="Mohamed A.S."/>
            <person name="Dignam J.D."/>
            <person name="Schlender K.K."/>
        </authorList>
    </citation>
    <scope>NUCLEOTIDE SEQUENCE [MRNA] OF 276-310</scope>
    <source>
        <tissue>Heart muscle</tissue>
    </source>
</reference>
<reference key="3">
    <citation type="journal article" date="2012" name="Nat. Commun.">
        <title>Quantitative maps of protein phosphorylation sites across 14 different rat organs and tissues.</title>
        <authorList>
            <person name="Lundby A."/>
            <person name="Secher A."/>
            <person name="Lage K."/>
            <person name="Nordsborg N.B."/>
            <person name="Dmytriyev A."/>
            <person name="Lundby C."/>
            <person name="Olsen J.V."/>
        </authorList>
    </citation>
    <scope>PHOSPHORYLATION [LARGE SCALE ANALYSIS] AT THR-117; SER-279; SER-288; SER-312; SER-459 AND THR-607</scope>
    <scope>IDENTIFICATION BY MASS SPECTROMETRY [LARGE SCALE ANALYSIS]</scope>
</reference>
<feature type="chain" id="PRO_0000072695" description="Myosin-binding protein C, cardiac-type">
    <location>
        <begin position="1"/>
        <end position="1274"/>
    </location>
</feature>
<feature type="domain" description="Ig-like C2-type 1">
    <location>
        <begin position="8"/>
        <end position="95"/>
    </location>
</feature>
<feature type="domain" description="Ig-like C2-type 2">
    <location>
        <begin position="157"/>
        <end position="259"/>
    </location>
</feature>
<feature type="domain" description="Ig-like C2-type 3">
    <location>
        <begin position="361"/>
        <end position="452"/>
    </location>
</feature>
<feature type="domain" description="Ig-like C2-type 4">
    <location>
        <begin position="452"/>
        <end position="546"/>
    </location>
</feature>
<feature type="domain" description="Ig-like C2-type 5">
    <location>
        <begin position="645"/>
        <end position="765"/>
    </location>
</feature>
<feature type="domain" description="Fibronectin type-III 1" evidence="5">
    <location>
        <begin position="774"/>
        <end position="870"/>
    </location>
</feature>
<feature type="domain" description="Fibronectin type-III 2" evidence="5">
    <location>
        <begin position="872"/>
        <end position="967"/>
    </location>
</feature>
<feature type="domain" description="Ig-like C2-type 6">
    <location>
        <begin position="971"/>
        <end position="1059"/>
    </location>
</feature>
<feature type="domain" description="Fibronectin type-III 3" evidence="5">
    <location>
        <begin position="1068"/>
        <end position="1163"/>
    </location>
</feature>
<feature type="domain" description="Ig-like C2-type 7">
    <location>
        <begin position="1181"/>
        <end position="1269"/>
    </location>
</feature>
<feature type="region of interest" description="Disordered" evidence="6">
    <location>
        <begin position="95"/>
        <end position="153"/>
    </location>
</feature>
<feature type="compositionally biased region" description="Basic and acidic residues" evidence="6">
    <location>
        <begin position="95"/>
        <end position="104"/>
    </location>
</feature>
<feature type="compositionally biased region" description="Polar residues" evidence="6">
    <location>
        <begin position="128"/>
        <end position="149"/>
    </location>
</feature>
<feature type="binding site" evidence="1">
    <location>
        <position position="212"/>
    </location>
    <ligand>
        <name>Zn(2+)</name>
        <dbReference type="ChEBI" id="CHEBI:29105"/>
    </ligand>
</feature>
<feature type="binding site" evidence="1">
    <location>
        <position position="214"/>
    </location>
    <ligand>
        <name>Zn(2+)</name>
        <dbReference type="ChEBI" id="CHEBI:29105"/>
    </ligand>
</feature>
<feature type="binding site" evidence="1">
    <location>
        <position position="227"/>
    </location>
    <ligand>
        <name>Zn(2+)</name>
        <dbReference type="ChEBI" id="CHEBI:29105"/>
    </ligand>
</feature>
<feature type="binding site" evidence="1">
    <location>
        <position position="229"/>
    </location>
    <ligand>
        <name>Zn(2+)</name>
        <dbReference type="ChEBI" id="CHEBI:29105"/>
    </ligand>
</feature>
<feature type="modified residue" description="N-acetylmethionine" evidence="2">
    <location>
        <position position="1"/>
    </location>
</feature>
<feature type="modified residue" description="Phosphoserine" evidence="2">
    <location>
        <position position="47"/>
    </location>
</feature>
<feature type="modified residue" description="Phosphothreonine" evidence="8">
    <location>
        <position position="117"/>
    </location>
</feature>
<feature type="modified residue" description="Phosphoserine" evidence="8">
    <location>
        <position position="279"/>
    </location>
</feature>
<feature type="modified residue" description="Phosphothreonine; by PKA and PKC" evidence="1">
    <location>
        <position position="287"/>
    </location>
</feature>
<feature type="modified residue" description="Phosphoserine" evidence="8">
    <location>
        <position position="288"/>
    </location>
</feature>
<feature type="modified residue" description="Phosphoserine; by PKA" evidence="2">
    <location>
        <position position="307"/>
    </location>
</feature>
<feature type="modified residue" description="Phosphoserine" evidence="8">
    <location>
        <position position="312"/>
    </location>
</feature>
<feature type="modified residue" description="Phosphoserine" evidence="2">
    <location>
        <position position="427"/>
    </location>
</feature>
<feature type="modified residue" description="Phosphoserine" evidence="8">
    <location>
        <position position="459"/>
    </location>
</feature>
<feature type="modified residue" description="Phosphoserine" evidence="2">
    <location>
        <position position="550"/>
    </location>
</feature>
<feature type="modified residue" description="Phosphothreonine" evidence="8">
    <location>
        <position position="607"/>
    </location>
</feature>
<feature type="modified residue" description="Omega-N-methylarginine" evidence="2">
    <location>
        <position position="1241"/>
    </location>
</feature>
<feature type="disulfide bond" evidence="4">
    <location>
        <begin position="436"/>
        <end position="443"/>
    </location>
</feature>
<feature type="sequence conflict" description="In Ref. 2; no nucleotide entry." evidence="7" ref="2">
    <original>S</original>
    <variation>RD</variation>
    <location>
        <position position="306"/>
    </location>
</feature>
<name>MYPC_RAT</name>
<sequence>MPEPGKRPVSAFTKKPRSVEVTAGSAAVFEAETERSGLKVQWQRDGSDIAANDKYGLAAEGKRHTLTVRDVGPDDQGSYAVIAGSSKVKFDLKVTEPAPPEKAESAVAPTSMEAPETPKEVPALATQLEGNVSSPEGSVSVTQDGSVAGSQGAPDDPIGLFLMRPQDGEVTVGGSIVFSARVAGASLLKPPVVKWFKGKWVDLSSKVGQHLQLHDSYDRASKVYLFELHITDAQATSAGGYRCEVSTKDKFDSCNFNLTVHEAIGSGDLDLRSAFRRTSLAGTGRRTSDSHEDAGTLDFSSLLKKSSFRRDSKLEAPAEEDVWEILRQAPPSEYERIAFQHGVTDLRGMLKRLKGMKHDEKKSTAFQKKLEPAYQVNKGHKIRLTVELADPDAEVKWLKNGQEIQMSGRYIFESIGAKRTLTISQCSLADDAAYQCVVGGEKCSTELFVKEPPVLITRSLEDQLVMVGQRVEFECEVSEEGAQVKWLKDGVELTREETFKYRFKKDGRKHHLIINEATLEDAGHYAVRTSGGQALAELIVQEKKLEVYQSIADLAVGAKDQAVFKCEVSDENVRGVWLKNGKELVPDNRIKVSHIGRVHKLTIDDVTPADEADYSFVPEGFACNLSAKLHFMEVKIDFVPRQEPPKIHLDCPGSTPDTIVVVAGNKLRLDVPISGDPAPTVIWQKTITQGKKASAGPPPGAPEDAGADEEWVFDKKLLCETEGRVRVETTKDRSVFTVEGAEKEDEGVYTVTVKNPVGEDQVNLTVKVIDVPDAPAAPKISNVGEDSCIVQWEPPAYDGGQPVLGYILERKKKKSYRWMRLNFDLLRELSHEARRMIEGVAYEMRVYAVNAVGMSRPSPASQPFMPIGPPGEPTHLTVEDVSDTTVSLKWRPPERVGAGGLDGYSVEYCQEGCSEWVTALQGLTERTSLLVKDLPTGARLLFRVRAHNVAGPGGPIITKEPVTVQEILQRPRLQLPRHLRQTIQKKVGEPVNLLIPFQGKPRPQVTWTKEGQPLAGEEVSIRNSPTDTILFIRAAHRTHSGTYQVTVRIENMEDKATLVLQIVDKPSPPLDIRVVETWGFSVALEWKPPQDDGNTEIWGYTVQKADKKTMEWFTVLEHYRQTHCVVSELIIGNGYYFRVFSHNMVGSSDRAAATKEPIFIPRPGITYEPPKYKALDFSEAPSFTQPLTNRSIIAGYNAILCCAVRGSPKPKISWFKNGLDLGEDARFRMFCKQGVLTLEIRKPCPYDGGVYVCRATNLQGEAQCECRLEVRVPQ</sequence>